<keyword id="KW-0285">Flavoprotein</keyword>
<keyword id="KW-0288">FMN</keyword>
<keyword id="KW-0520">NAD</keyword>
<keyword id="KW-0560">Oxidoreductase</keyword>
<feature type="chain" id="PRO_0000166356" description="FMN-dependent NADH:quinone oxidoreductase">
    <location>
        <begin position="1"/>
        <end position="208"/>
    </location>
</feature>
<feature type="binding site" evidence="1">
    <location>
        <begin position="17"/>
        <end position="19"/>
    </location>
    <ligand>
        <name>FMN</name>
        <dbReference type="ChEBI" id="CHEBI:58210"/>
    </ligand>
</feature>
<feature type="binding site" evidence="1">
    <location>
        <begin position="99"/>
        <end position="102"/>
    </location>
    <ligand>
        <name>FMN</name>
        <dbReference type="ChEBI" id="CHEBI:58210"/>
    </ligand>
</feature>
<feature type="binding site" evidence="1">
    <location>
        <begin position="143"/>
        <end position="146"/>
    </location>
    <ligand>
        <name>FMN</name>
        <dbReference type="ChEBI" id="CHEBI:58210"/>
    </ligand>
</feature>
<proteinExistence type="inferred from homology"/>
<protein>
    <recommendedName>
        <fullName evidence="1">FMN-dependent NADH:quinone oxidoreductase</fullName>
        <ecNumber evidence="1">1.6.5.-</ecNumber>
    </recommendedName>
    <alternativeName>
        <fullName evidence="1">Azo-dye reductase</fullName>
    </alternativeName>
    <alternativeName>
        <fullName evidence="1">FMN-dependent NADH-azo compound oxidoreductase</fullName>
    </alternativeName>
    <alternativeName>
        <fullName evidence="1">FMN-dependent NADH-azoreductase</fullName>
        <ecNumber evidence="1">1.7.1.17</ecNumber>
    </alternativeName>
</protein>
<sequence length="208" mass="23333">MAKVLYITAHPFNELVSNSMAAGKAFIETYQQQHPEDEVKHIDLFETYIPVIDKDVLTGWGKMSNGETLTDDEQMKVSRLSDILEEFLSADKYVLVTPMWNLSFPPVVKAYIDAISIAGKTFKYSAEGPQGLLTDKKVLHIQSRGGYYTEGPAADFEMGDRYLRTIMTFLGVPSYETIIIEGHNAEPHKTEEIKATSINNAEKLATTF</sequence>
<accession>Q6GKA4</accession>
<gene>
    <name evidence="1" type="primary">azoR</name>
    <name type="ordered locus">SAR0203</name>
</gene>
<reference key="1">
    <citation type="journal article" date="2004" name="Proc. Natl. Acad. Sci. U.S.A.">
        <title>Complete genomes of two clinical Staphylococcus aureus strains: evidence for the rapid evolution of virulence and drug resistance.</title>
        <authorList>
            <person name="Holden M.T.G."/>
            <person name="Feil E.J."/>
            <person name="Lindsay J.A."/>
            <person name="Peacock S.J."/>
            <person name="Day N.P.J."/>
            <person name="Enright M.C."/>
            <person name="Foster T.J."/>
            <person name="Moore C.E."/>
            <person name="Hurst L."/>
            <person name="Atkin R."/>
            <person name="Barron A."/>
            <person name="Bason N."/>
            <person name="Bentley S.D."/>
            <person name="Chillingworth C."/>
            <person name="Chillingworth T."/>
            <person name="Churcher C."/>
            <person name="Clark L."/>
            <person name="Corton C."/>
            <person name="Cronin A."/>
            <person name="Doggett J."/>
            <person name="Dowd L."/>
            <person name="Feltwell T."/>
            <person name="Hance Z."/>
            <person name="Harris B."/>
            <person name="Hauser H."/>
            <person name="Holroyd S."/>
            <person name="Jagels K."/>
            <person name="James K.D."/>
            <person name="Lennard N."/>
            <person name="Line A."/>
            <person name="Mayes R."/>
            <person name="Moule S."/>
            <person name="Mungall K."/>
            <person name="Ormond D."/>
            <person name="Quail M.A."/>
            <person name="Rabbinowitsch E."/>
            <person name="Rutherford K.M."/>
            <person name="Sanders M."/>
            <person name="Sharp S."/>
            <person name="Simmonds M."/>
            <person name="Stevens K."/>
            <person name="Whitehead S."/>
            <person name="Barrell B.G."/>
            <person name="Spratt B.G."/>
            <person name="Parkhill J."/>
        </authorList>
    </citation>
    <scope>NUCLEOTIDE SEQUENCE [LARGE SCALE GENOMIC DNA]</scope>
    <source>
        <strain>MRSA252</strain>
    </source>
</reference>
<organism>
    <name type="scientific">Staphylococcus aureus (strain MRSA252)</name>
    <dbReference type="NCBI Taxonomy" id="282458"/>
    <lineage>
        <taxon>Bacteria</taxon>
        <taxon>Bacillati</taxon>
        <taxon>Bacillota</taxon>
        <taxon>Bacilli</taxon>
        <taxon>Bacillales</taxon>
        <taxon>Staphylococcaceae</taxon>
        <taxon>Staphylococcus</taxon>
    </lineage>
</organism>
<dbReference type="EC" id="1.6.5.-" evidence="1"/>
<dbReference type="EC" id="1.7.1.17" evidence="1"/>
<dbReference type="EMBL" id="BX571856">
    <property type="protein sequence ID" value="CAG39230.1"/>
    <property type="molecule type" value="Genomic_DNA"/>
</dbReference>
<dbReference type="RefSeq" id="WP_001151462.1">
    <property type="nucleotide sequence ID" value="NC_002952.2"/>
</dbReference>
<dbReference type="SMR" id="Q6GKA4"/>
<dbReference type="KEGG" id="sar:SAR0203"/>
<dbReference type="HOGENOM" id="CLU_088964_3_1_9"/>
<dbReference type="Proteomes" id="UP000000596">
    <property type="component" value="Chromosome"/>
</dbReference>
<dbReference type="GO" id="GO:0009055">
    <property type="term" value="F:electron transfer activity"/>
    <property type="evidence" value="ECO:0007669"/>
    <property type="project" value="UniProtKB-UniRule"/>
</dbReference>
<dbReference type="GO" id="GO:0010181">
    <property type="term" value="F:FMN binding"/>
    <property type="evidence" value="ECO:0007669"/>
    <property type="project" value="UniProtKB-UniRule"/>
</dbReference>
<dbReference type="GO" id="GO:0016652">
    <property type="term" value="F:oxidoreductase activity, acting on NAD(P)H as acceptor"/>
    <property type="evidence" value="ECO:0007669"/>
    <property type="project" value="UniProtKB-UniRule"/>
</dbReference>
<dbReference type="GO" id="GO:0016655">
    <property type="term" value="F:oxidoreductase activity, acting on NAD(P)H, quinone or similar compound as acceptor"/>
    <property type="evidence" value="ECO:0007669"/>
    <property type="project" value="InterPro"/>
</dbReference>
<dbReference type="Gene3D" id="3.40.50.360">
    <property type="match status" value="1"/>
</dbReference>
<dbReference type="HAMAP" id="MF_01216">
    <property type="entry name" value="Azoreductase_type1"/>
    <property type="match status" value="1"/>
</dbReference>
<dbReference type="InterPro" id="IPR003680">
    <property type="entry name" value="Flavodoxin_fold"/>
</dbReference>
<dbReference type="InterPro" id="IPR029039">
    <property type="entry name" value="Flavoprotein-like_sf"/>
</dbReference>
<dbReference type="InterPro" id="IPR050104">
    <property type="entry name" value="FMN-dep_NADH:Q_OxRdtase_AzoR1"/>
</dbReference>
<dbReference type="InterPro" id="IPR023048">
    <property type="entry name" value="NADH:quinone_OxRdtase_FMN_depd"/>
</dbReference>
<dbReference type="NCBIfam" id="NF010075">
    <property type="entry name" value="PRK13556.1"/>
    <property type="match status" value="1"/>
</dbReference>
<dbReference type="PANTHER" id="PTHR43741">
    <property type="entry name" value="FMN-DEPENDENT NADH-AZOREDUCTASE 1"/>
    <property type="match status" value="1"/>
</dbReference>
<dbReference type="PANTHER" id="PTHR43741:SF7">
    <property type="entry name" value="FMN-DEPENDENT NADH:QUINONE OXIDOREDUCTASE"/>
    <property type="match status" value="1"/>
</dbReference>
<dbReference type="Pfam" id="PF02525">
    <property type="entry name" value="Flavodoxin_2"/>
    <property type="match status" value="1"/>
</dbReference>
<dbReference type="SUPFAM" id="SSF52218">
    <property type="entry name" value="Flavoproteins"/>
    <property type="match status" value="1"/>
</dbReference>
<comment type="function">
    <text evidence="1">Quinone reductase that provides resistance to thiol-specific stress caused by electrophilic quinones.</text>
</comment>
<comment type="function">
    <text evidence="1">Also exhibits azoreductase activity. Catalyzes the reductive cleavage of the azo bond in aromatic azo compounds to the corresponding amines.</text>
</comment>
<comment type="catalytic activity">
    <reaction evidence="1">
        <text>2 a quinone + NADH + H(+) = 2 a 1,4-benzosemiquinone + NAD(+)</text>
        <dbReference type="Rhea" id="RHEA:65952"/>
        <dbReference type="ChEBI" id="CHEBI:15378"/>
        <dbReference type="ChEBI" id="CHEBI:57540"/>
        <dbReference type="ChEBI" id="CHEBI:57945"/>
        <dbReference type="ChEBI" id="CHEBI:132124"/>
        <dbReference type="ChEBI" id="CHEBI:134225"/>
    </reaction>
</comment>
<comment type="catalytic activity">
    <reaction evidence="1">
        <text>N,N-dimethyl-1,4-phenylenediamine + anthranilate + 2 NAD(+) = 2-(4-dimethylaminophenyl)diazenylbenzoate + 2 NADH + 2 H(+)</text>
        <dbReference type="Rhea" id="RHEA:55872"/>
        <dbReference type="ChEBI" id="CHEBI:15378"/>
        <dbReference type="ChEBI" id="CHEBI:15783"/>
        <dbReference type="ChEBI" id="CHEBI:16567"/>
        <dbReference type="ChEBI" id="CHEBI:57540"/>
        <dbReference type="ChEBI" id="CHEBI:57945"/>
        <dbReference type="ChEBI" id="CHEBI:71579"/>
        <dbReference type="EC" id="1.7.1.17"/>
    </reaction>
</comment>
<comment type="cofactor">
    <cofactor evidence="1">
        <name>FMN</name>
        <dbReference type="ChEBI" id="CHEBI:58210"/>
    </cofactor>
    <text evidence="1">Binds 1 FMN per subunit.</text>
</comment>
<comment type="subunit">
    <text evidence="1">Homodimer.</text>
</comment>
<comment type="similarity">
    <text evidence="1">Belongs to the azoreductase type 1 family.</text>
</comment>
<name>AZOR_STAAR</name>
<evidence type="ECO:0000255" key="1">
    <source>
        <dbReference type="HAMAP-Rule" id="MF_01216"/>
    </source>
</evidence>